<gene>
    <name evidence="1" type="primary">ispG</name>
    <name type="ordered locus">Achl_1416</name>
</gene>
<proteinExistence type="inferred from homology"/>
<dbReference type="EC" id="1.17.7.3" evidence="1"/>
<dbReference type="EMBL" id="CP001341">
    <property type="protein sequence ID" value="ACL39406.1"/>
    <property type="molecule type" value="Genomic_DNA"/>
</dbReference>
<dbReference type="RefSeq" id="WP_015936629.1">
    <property type="nucleotide sequence ID" value="NC_011886.1"/>
</dbReference>
<dbReference type="SMR" id="B8HG44"/>
<dbReference type="STRING" id="452863.Achl_1416"/>
<dbReference type="KEGG" id="ach:Achl_1416"/>
<dbReference type="eggNOG" id="COG0821">
    <property type="taxonomic scope" value="Bacteria"/>
</dbReference>
<dbReference type="HOGENOM" id="CLU_042258_0_0_11"/>
<dbReference type="OrthoDB" id="9803214at2"/>
<dbReference type="UniPathway" id="UPA00056">
    <property type="reaction ID" value="UER00096"/>
</dbReference>
<dbReference type="Proteomes" id="UP000002505">
    <property type="component" value="Chromosome"/>
</dbReference>
<dbReference type="GO" id="GO:0051539">
    <property type="term" value="F:4 iron, 4 sulfur cluster binding"/>
    <property type="evidence" value="ECO:0007669"/>
    <property type="project" value="UniProtKB-UniRule"/>
</dbReference>
<dbReference type="GO" id="GO:0046429">
    <property type="term" value="F:4-hydroxy-3-methylbut-2-en-1-yl diphosphate synthase activity (ferredoxin)"/>
    <property type="evidence" value="ECO:0007669"/>
    <property type="project" value="UniProtKB-UniRule"/>
</dbReference>
<dbReference type="GO" id="GO:0141197">
    <property type="term" value="F:4-hydroxy-3-methylbut-2-enyl-diphosphate synthase activity (flavodoxin)"/>
    <property type="evidence" value="ECO:0007669"/>
    <property type="project" value="UniProtKB-EC"/>
</dbReference>
<dbReference type="GO" id="GO:0005506">
    <property type="term" value="F:iron ion binding"/>
    <property type="evidence" value="ECO:0007669"/>
    <property type="project" value="InterPro"/>
</dbReference>
<dbReference type="GO" id="GO:0019288">
    <property type="term" value="P:isopentenyl diphosphate biosynthetic process, methylerythritol 4-phosphate pathway"/>
    <property type="evidence" value="ECO:0007669"/>
    <property type="project" value="UniProtKB-UniRule"/>
</dbReference>
<dbReference type="GO" id="GO:0016114">
    <property type="term" value="P:terpenoid biosynthetic process"/>
    <property type="evidence" value="ECO:0007669"/>
    <property type="project" value="InterPro"/>
</dbReference>
<dbReference type="FunFam" id="3.20.20.20:FF:000001">
    <property type="entry name" value="4-hydroxy-3-methylbut-2-en-1-yl diphosphate synthase (flavodoxin)"/>
    <property type="match status" value="1"/>
</dbReference>
<dbReference type="FunFam" id="3.30.413.10:FF:000001">
    <property type="entry name" value="4-hydroxy-3-methylbut-2-en-1-yl diphosphate synthase (flavodoxin)"/>
    <property type="match status" value="1"/>
</dbReference>
<dbReference type="Gene3D" id="3.20.20.20">
    <property type="entry name" value="Dihydropteroate synthase-like"/>
    <property type="match status" value="1"/>
</dbReference>
<dbReference type="Gene3D" id="3.30.413.10">
    <property type="entry name" value="Sulfite Reductase Hemoprotein, domain 1"/>
    <property type="match status" value="1"/>
</dbReference>
<dbReference type="HAMAP" id="MF_00159">
    <property type="entry name" value="IspG"/>
    <property type="match status" value="1"/>
</dbReference>
<dbReference type="InterPro" id="IPR011005">
    <property type="entry name" value="Dihydropteroate_synth-like_sf"/>
</dbReference>
<dbReference type="InterPro" id="IPR016425">
    <property type="entry name" value="IspG_bac"/>
</dbReference>
<dbReference type="InterPro" id="IPR004588">
    <property type="entry name" value="IspG_bac-typ"/>
</dbReference>
<dbReference type="InterPro" id="IPR045854">
    <property type="entry name" value="NO2/SO3_Rdtase_4Fe4S_sf"/>
</dbReference>
<dbReference type="NCBIfam" id="TIGR00612">
    <property type="entry name" value="ispG_gcpE"/>
    <property type="match status" value="1"/>
</dbReference>
<dbReference type="NCBIfam" id="NF001540">
    <property type="entry name" value="PRK00366.1"/>
    <property type="match status" value="1"/>
</dbReference>
<dbReference type="PANTHER" id="PTHR30454">
    <property type="entry name" value="4-HYDROXY-3-METHYLBUT-2-EN-1-YL DIPHOSPHATE SYNTHASE"/>
    <property type="match status" value="1"/>
</dbReference>
<dbReference type="PANTHER" id="PTHR30454:SF0">
    <property type="entry name" value="4-HYDROXY-3-METHYLBUT-2-EN-1-YL DIPHOSPHATE SYNTHASE (FERREDOXIN), CHLOROPLASTIC"/>
    <property type="match status" value="1"/>
</dbReference>
<dbReference type="Pfam" id="PF04551">
    <property type="entry name" value="GcpE"/>
    <property type="match status" value="1"/>
</dbReference>
<dbReference type="PIRSF" id="PIRSF004640">
    <property type="entry name" value="IspG"/>
    <property type="match status" value="1"/>
</dbReference>
<dbReference type="SUPFAM" id="SSF51717">
    <property type="entry name" value="Dihydropteroate synthetase-like"/>
    <property type="match status" value="1"/>
</dbReference>
<dbReference type="SUPFAM" id="SSF56014">
    <property type="entry name" value="Nitrite and sulphite reductase 4Fe-4S domain-like"/>
    <property type="match status" value="1"/>
</dbReference>
<keyword id="KW-0004">4Fe-4S</keyword>
<keyword id="KW-0408">Iron</keyword>
<keyword id="KW-0411">Iron-sulfur</keyword>
<keyword id="KW-0414">Isoprene biosynthesis</keyword>
<keyword id="KW-0479">Metal-binding</keyword>
<keyword id="KW-0560">Oxidoreductase</keyword>
<organism>
    <name type="scientific">Pseudarthrobacter chlorophenolicus (strain ATCC 700700 / DSM 12829 / CIP 107037 / JCM 12360 / KCTC 9906 / NCIMB 13794 / A6)</name>
    <name type="common">Arthrobacter chlorophenolicus</name>
    <dbReference type="NCBI Taxonomy" id="452863"/>
    <lineage>
        <taxon>Bacteria</taxon>
        <taxon>Bacillati</taxon>
        <taxon>Actinomycetota</taxon>
        <taxon>Actinomycetes</taxon>
        <taxon>Micrococcales</taxon>
        <taxon>Micrococcaceae</taxon>
        <taxon>Pseudarthrobacter</taxon>
    </lineage>
</organism>
<evidence type="ECO:0000255" key="1">
    <source>
        <dbReference type="HAMAP-Rule" id="MF_00159"/>
    </source>
</evidence>
<name>ISPG_PSECP</name>
<feature type="chain" id="PRO_1000123430" description="4-hydroxy-3-methylbut-2-en-1-yl diphosphate synthase (flavodoxin)">
    <location>
        <begin position="1"/>
        <end position="388"/>
    </location>
</feature>
<feature type="binding site" evidence="1">
    <location>
        <position position="281"/>
    </location>
    <ligand>
        <name>[4Fe-4S] cluster</name>
        <dbReference type="ChEBI" id="CHEBI:49883"/>
    </ligand>
</feature>
<feature type="binding site" evidence="1">
    <location>
        <position position="284"/>
    </location>
    <ligand>
        <name>[4Fe-4S] cluster</name>
        <dbReference type="ChEBI" id="CHEBI:49883"/>
    </ligand>
</feature>
<feature type="binding site" evidence="1">
    <location>
        <position position="316"/>
    </location>
    <ligand>
        <name>[4Fe-4S] cluster</name>
        <dbReference type="ChEBI" id="CHEBI:49883"/>
    </ligand>
</feature>
<feature type="binding site" evidence="1">
    <location>
        <position position="323"/>
    </location>
    <ligand>
        <name>[4Fe-4S] cluster</name>
        <dbReference type="ChEBI" id="CHEBI:49883"/>
    </ligand>
</feature>
<sequence>MTSVSLGMPAAPPPVLAPRRKTRQIKVGSVGVGSDSPISVQSMTTTPTTDINATLQQIAELTASGCDIVRVACPSADDAEALPIIARKSQIPVIADIHFQPKYVFAAIEAGCAAVRVNPGNIRKFDDQVKEIAAAARDHGTSIRIGVNAGSLEPGILKKYGKATPEALVESAVWEASLFEEHGFHDFKISVKHNDPVIMVAAYEMLAEKGDWPLHLGVTEAGPAFQGTIKSATAFGALLSRGIGDTIRVSLSAPPVEEIKVGNQILQSLNLRPRKLEIVSCPSCGRAQVDVYTLAEQVTAGLEGMEIPLRVAVMGCVVNGPGEAREADLGVASGNGKGQIFVKGEVIKTVPESQIVETLIEEAMRIAEEMGEADGEDAVKGGPVVSVS</sequence>
<comment type="function">
    <text evidence="1">Converts 2C-methyl-D-erythritol 2,4-cyclodiphosphate (ME-2,4cPP) into 1-hydroxy-2-methyl-2-(E)-butenyl 4-diphosphate.</text>
</comment>
<comment type="catalytic activity">
    <reaction evidence="1">
        <text>(2E)-4-hydroxy-3-methylbut-2-enyl diphosphate + oxidized [flavodoxin] + H2O + 2 H(+) = 2-C-methyl-D-erythritol 2,4-cyclic diphosphate + reduced [flavodoxin]</text>
        <dbReference type="Rhea" id="RHEA:43604"/>
        <dbReference type="Rhea" id="RHEA-COMP:10622"/>
        <dbReference type="Rhea" id="RHEA-COMP:10623"/>
        <dbReference type="ChEBI" id="CHEBI:15377"/>
        <dbReference type="ChEBI" id="CHEBI:15378"/>
        <dbReference type="ChEBI" id="CHEBI:57618"/>
        <dbReference type="ChEBI" id="CHEBI:58210"/>
        <dbReference type="ChEBI" id="CHEBI:58483"/>
        <dbReference type="ChEBI" id="CHEBI:128753"/>
        <dbReference type="EC" id="1.17.7.3"/>
    </reaction>
</comment>
<comment type="cofactor">
    <cofactor evidence="1">
        <name>[4Fe-4S] cluster</name>
        <dbReference type="ChEBI" id="CHEBI:49883"/>
    </cofactor>
    <text evidence="1">Binds 1 [4Fe-4S] cluster.</text>
</comment>
<comment type="pathway">
    <text evidence="1">Isoprenoid biosynthesis; isopentenyl diphosphate biosynthesis via DXP pathway; isopentenyl diphosphate from 1-deoxy-D-xylulose 5-phosphate: step 5/6.</text>
</comment>
<comment type="similarity">
    <text evidence="1">Belongs to the IspG family.</text>
</comment>
<reference key="1">
    <citation type="submission" date="2009-01" db="EMBL/GenBank/DDBJ databases">
        <title>Complete sequence of chromosome of Arthrobacter chlorophenolicus A6.</title>
        <authorList>
            <consortium name="US DOE Joint Genome Institute"/>
            <person name="Lucas S."/>
            <person name="Copeland A."/>
            <person name="Lapidus A."/>
            <person name="Glavina del Rio T."/>
            <person name="Tice H."/>
            <person name="Bruce D."/>
            <person name="Goodwin L."/>
            <person name="Pitluck S."/>
            <person name="Goltsman E."/>
            <person name="Clum A."/>
            <person name="Larimer F."/>
            <person name="Land M."/>
            <person name="Hauser L."/>
            <person name="Kyrpides N."/>
            <person name="Mikhailova N."/>
            <person name="Jansson J."/>
            <person name="Richardson P."/>
        </authorList>
    </citation>
    <scope>NUCLEOTIDE SEQUENCE [LARGE SCALE GENOMIC DNA]</scope>
    <source>
        <strain>ATCC 700700 / DSM 12829 / CIP 107037 / JCM 12360 / KCTC 9906 / NCIMB 13794 / A6</strain>
    </source>
</reference>
<accession>B8HG44</accession>
<protein>
    <recommendedName>
        <fullName evidence="1">4-hydroxy-3-methylbut-2-en-1-yl diphosphate synthase (flavodoxin)</fullName>
        <ecNumber evidence="1">1.17.7.3</ecNumber>
    </recommendedName>
    <alternativeName>
        <fullName evidence="1">1-hydroxy-2-methyl-2-(E)-butenyl 4-diphosphate synthase</fullName>
    </alternativeName>
</protein>